<sequence>MNQTLEEVVSLARQCGCGHRHYDIPIEQMVVGREAFARLVAYLRHKRYERVAIVADDHTFAAVERSLCDQLENGSIRYTVCLVQPDENGDVIADERSIVQVLLETPDDVDVLIAVGAGTIHDITRFSSYKMRIPFISVPTAPSVDGFTSMGAPLIIRGVKKTIQAQAPIAVFAHTGVLCQSPKEMIAAGFGDMVAKYTSLADWQFAHWMADEPYCPFVHQLTEQSLQTCVDHIDDIAAGGEQGIRVLMDALLQSGIAMLLMGQSYSASGAEHHLSHYWEMEFLRQKKRQVLHGAKVGVSTPIIIEHYQRVFWPLLNELEKRPKSMDEATWERLKANTASIRELLESLPSPERIRTMLAKVGGAIAPEQLGIDPQLVERSLREAHRLRLNRFTMLYFLNELIFVE</sequence>
<keyword id="KW-0963">Cytoplasm</keyword>
<keyword id="KW-0444">Lipid biosynthesis</keyword>
<keyword id="KW-0443">Lipid metabolism</keyword>
<keyword id="KW-0479">Metal-binding</keyword>
<keyword id="KW-0520">NAD</keyword>
<keyword id="KW-0521">NADP</keyword>
<keyword id="KW-0533">Nickel</keyword>
<keyword id="KW-0560">Oxidoreductase</keyword>
<keyword id="KW-0594">Phospholipid biosynthesis</keyword>
<keyword id="KW-1208">Phospholipid metabolism</keyword>
<organism>
    <name type="scientific">Geobacillus stearothermophilus</name>
    <name type="common">Bacillus stearothermophilus</name>
    <dbReference type="NCBI Taxonomy" id="1422"/>
    <lineage>
        <taxon>Bacteria</taxon>
        <taxon>Bacillati</taxon>
        <taxon>Bacillota</taxon>
        <taxon>Bacilli</taxon>
        <taxon>Bacillales</taxon>
        <taxon>Anoxybacillaceae</taxon>
        <taxon>Geobacillus</taxon>
    </lineage>
</organism>
<proteinExistence type="inferred from homology"/>
<comment type="function">
    <text evidence="1">Catalyzes the NAD(P)H-dependent reduction of dihydroxyacetonephosphate (DHAP or glycerone phosphate) to glycerol 1-phosphate (G1P). The G1P thus generated is probably used for the synthesis of phosphoglycerolipids in Gram-positive bacterial species.</text>
</comment>
<comment type="catalytic activity">
    <reaction evidence="1">
        <text>sn-glycerol 1-phosphate + NAD(+) = dihydroxyacetone phosphate + NADH + H(+)</text>
        <dbReference type="Rhea" id="RHEA:21412"/>
        <dbReference type="ChEBI" id="CHEBI:15378"/>
        <dbReference type="ChEBI" id="CHEBI:57540"/>
        <dbReference type="ChEBI" id="CHEBI:57642"/>
        <dbReference type="ChEBI" id="CHEBI:57685"/>
        <dbReference type="ChEBI" id="CHEBI:57945"/>
        <dbReference type="EC" id="1.1.1.261"/>
    </reaction>
</comment>
<comment type="catalytic activity">
    <reaction evidence="1">
        <text>sn-glycerol 1-phosphate + NADP(+) = dihydroxyacetone phosphate + NADPH + H(+)</text>
        <dbReference type="Rhea" id="RHEA:21416"/>
        <dbReference type="ChEBI" id="CHEBI:15378"/>
        <dbReference type="ChEBI" id="CHEBI:57642"/>
        <dbReference type="ChEBI" id="CHEBI:57685"/>
        <dbReference type="ChEBI" id="CHEBI:57783"/>
        <dbReference type="ChEBI" id="CHEBI:58349"/>
        <dbReference type="EC" id="1.1.1.261"/>
    </reaction>
</comment>
<comment type="cofactor">
    <cofactor evidence="1">
        <name>Ni(2+)</name>
        <dbReference type="ChEBI" id="CHEBI:49786"/>
    </cofactor>
    <text evidence="1">Binds 1 nickel ion per subunit.</text>
</comment>
<comment type="subunit">
    <text evidence="1">Homodimer.</text>
</comment>
<comment type="subcellular location">
    <subcellularLocation>
        <location evidence="1">Cytoplasm</location>
    </subcellularLocation>
</comment>
<comment type="similarity">
    <text evidence="1">Belongs to the glycerol-1-phosphate dehydrogenase family.</text>
</comment>
<comment type="sequence caution" evidence="2">
    <conflict type="erroneous initiation">
        <sequence resource="EMBL-CDS" id="ACE73686"/>
    </conflict>
</comment>
<name>G1PDH_GEOSE</name>
<accession>B3EYN8</accession>
<reference key="1">
    <citation type="submission" date="2008-06" db="EMBL/GenBank/DDBJ databases">
        <title>Hemicellulose utilization cluster in Geobacillus stearothermophilus strain T-6.</title>
        <authorList>
            <person name="Shoham Y."/>
            <person name="Shulami S."/>
            <person name="Ben-David A."/>
            <person name="Langut Y."/>
        </authorList>
    </citation>
    <scope>NUCLEOTIDE SEQUENCE [GENOMIC DNA]</scope>
    <source>
        <strain>T-6 / NCIMB 40222</strain>
    </source>
</reference>
<protein>
    <recommendedName>
        <fullName evidence="1">Glycerol-1-phosphate dehydrogenase [NAD(P)+]</fullName>
        <shortName evidence="1">G1P dehydrogenase</shortName>
        <shortName evidence="1">G1PDH</shortName>
        <ecNumber evidence="1">1.1.1.261</ecNumber>
    </recommendedName>
    <alternativeName>
        <fullName evidence="1">Enantiomeric glycerophosphate synthase</fullName>
    </alternativeName>
    <alternativeName>
        <fullName evidence="1">sn-glycerol-1-phosphate dehydrogenase</fullName>
    </alternativeName>
</protein>
<dbReference type="EC" id="1.1.1.261" evidence="1"/>
<dbReference type="EMBL" id="DQ868502">
    <property type="protein sequence ID" value="ACE73686.1"/>
    <property type="status" value="ALT_INIT"/>
    <property type="molecule type" value="Genomic_DNA"/>
</dbReference>
<dbReference type="SMR" id="B3EYN8"/>
<dbReference type="GO" id="GO:0005737">
    <property type="term" value="C:cytoplasm"/>
    <property type="evidence" value="ECO:0007669"/>
    <property type="project" value="UniProtKB-SubCell"/>
</dbReference>
<dbReference type="GO" id="GO:0106357">
    <property type="term" value="F:glycerol-1-phosphate dehydrogenase (NAD+) activity"/>
    <property type="evidence" value="ECO:0007669"/>
    <property type="project" value="RHEA"/>
</dbReference>
<dbReference type="GO" id="GO:0106358">
    <property type="term" value="F:glycerol-1-phosphate dehydrogenase (NADP+) activity"/>
    <property type="evidence" value="ECO:0007669"/>
    <property type="project" value="RHEA"/>
</dbReference>
<dbReference type="GO" id="GO:0046872">
    <property type="term" value="F:metal ion binding"/>
    <property type="evidence" value="ECO:0007669"/>
    <property type="project" value="UniProtKB-KW"/>
</dbReference>
<dbReference type="GO" id="GO:0006650">
    <property type="term" value="P:glycerophospholipid metabolic process"/>
    <property type="evidence" value="ECO:0007669"/>
    <property type="project" value="UniProtKB-UniRule"/>
</dbReference>
<dbReference type="GO" id="GO:0008654">
    <property type="term" value="P:phospholipid biosynthetic process"/>
    <property type="evidence" value="ECO:0007669"/>
    <property type="project" value="UniProtKB-KW"/>
</dbReference>
<dbReference type="CDD" id="cd08549">
    <property type="entry name" value="G1PDH_related"/>
    <property type="match status" value="1"/>
</dbReference>
<dbReference type="Gene3D" id="3.40.50.1970">
    <property type="match status" value="1"/>
</dbReference>
<dbReference type="Gene3D" id="1.20.1090.10">
    <property type="entry name" value="Dehydroquinate synthase-like - alpha domain"/>
    <property type="match status" value="1"/>
</dbReference>
<dbReference type="HAMAP" id="MF_00497_B">
    <property type="entry name" value="G1P_dehydrogenase_B"/>
    <property type="match status" value="1"/>
</dbReference>
<dbReference type="InterPro" id="IPR023003">
    <property type="entry name" value="G1P_dehydrogenase_bac"/>
</dbReference>
<dbReference type="InterPro" id="IPR032837">
    <property type="entry name" value="G1PDH"/>
</dbReference>
<dbReference type="InterPro" id="IPR016205">
    <property type="entry name" value="Glycerol_DH"/>
</dbReference>
<dbReference type="PANTHER" id="PTHR43616">
    <property type="entry name" value="GLYCEROL DEHYDROGENASE"/>
    <property type="match status" value="1"/>
</dbReference>
<dbReference type="PANTHER" id="PTHR43616:SF5">
    <property type="entry name" value="GLYCEROL DEHYDROGENASE 1"/>
    <property type="match status" value="1"/>
</dbReference>
<dbReference type="Pfam" id="PF13685">
    <property type="entry name" value="Fe-ADH_2"/>
    <property type="match status" value="1"/>
</dbReference>
<dbReference type="SUPFAM" id="SSF56796">
    <property type="entry name" value="Dehydroquinate synthase-like"/>
    <property type="match status" value="1"/>
</dbReference>
<evidence type="ECO:0000255" key="1">
    <source>
        <dbReference type="HAMAP-Rule" id="MF_00497"/>
    </source>
</evidence>
<evidence type="ECO:0000305" key="2"/>
<feature type="chain" id="PRO_0000350640" description="Glycerol-1-phosphate dehydrogenase [NAD(P)+]">
    <location>
        <begin position="1"/>
        <end position="404"/>
    </location>
</feature>
<feature type="binding site" evidence="1">
    <location>
        <position position="56"/>
    </location>
    <ligand>
        <name>NAD(+)</name>
        <dbReference type="ChEBI" id="CHEBI:57540"/>
    </ligand>
</feature>
<feature type="binding site" evidence="1">
    <location>
        <begin position="118"/>
        <end position="122"/>
    </location>
    <ligand>
        <name>NAD(+)</name>
        <dbReference type="ChEBI" id="CHEBI:57540"/>
    </ligand>
</feature>
<feature type="binding site" evidence="1">
    <location>
        <begin position="140"/>
        <end position="143"/>
    </location>
    <ligand>
        <name>NAD(+)</name>
        <dbReference type="ChEBI" id="CHEBI:57540"/>
    </ligand>
</feature>
<feature type="binding site" evidence="1">
    <location>
        <position position="145"/>
    </location>
    <ligand>
        <name>substrate</name>
    </ligand>
</feature>
<feature type="binding site" evidence="1">
    <location>
        <position position="149"/>
    </location>
    <ligand>
        <name>NAD(+)</name>
        <dbReference type="ChEBI" id="CHEBI:57540"/>
    </ligand>
</feature>
<feature type="binding site" evidence="1">
    <location>
        <position position="192"/>
    </location>
    <ligand>
        <name>Ni(2+)</name>
        <dbReference type="ChEBI" id="CHEBI:49786"/>
        <note>catalytic</note>
    </ligand>
</feature>
<feature type="binding site" evidence="1">
    <location>
        <position position="192"/>
    </location>
    <ligand>
        <name>substrate</name>
    </ligand>
</feature>
<feature type="binding site" evidence="1">
    <location>
        <position position="272"/>
    </location>
    <ligand>
        <name>Ni(2+)</name>
        <dbReference type="ChEBI" id="CHEBI:49786"/>
        <note>catalytic</note>
    </ligand>
</feature>
<feature type="binding site" evidence="1">
    <location>
        <position position="276"/>
    </location>
    <ligand>
        <name>substrate</name>
    </ligand>
</feature>
<feature type="binding site" evidence="1">
    <location>
        <position position="292"/>
    </location>
    <ligand>
        <name>Ni(2+)</name>
        <dbReference type="ChEBI" id="CHEBI:49786"/>
        <note>catalytic</note>
    </ligand>
</feature>
<gene>
    <name evidence="1" type="primary">egsA</name>
    <name type="synonym">araM</name>
</gene>